<reference key="1">
    <citation type="journal article" date="1996" name="Immunogenetics">
        <title>The sheep CD1 gene family contains at least four CD1B homologues.</title>
        <authorList>
            <person name="Ferguson E.E."/>
            <person name="Dutia B.M."/>
            <person name="Hein W.R."/>
            <person name="Hopkins J."/>
        </authorList>
    </citation>
    <scope>NUCLEOTIDE SEQUENCE [MRNA]</scope>
    <source>
        <tissue>Fetal thymocyte</tissue>
    </source>
</reference>
<sequence>MLLLPLLLLAVIVPGGDNEDVFQGPTSFHVIQISTFANSTWAQNQGSGWLDNLQLYGWDSDPGTTIFLKPWSKGNFSDEEVTELEELFRVYLIGFTLEVQDHVSEFQLEYPFVIQDIAGCELHPGKAVESFLKGAFGGLDFVSIKNDSCAPVPEGGSMAQRFYELIIQYHAICDTIAKLLLETCPRYFLSVLDAGKAELQRQVKPEAWLSSGPTPGPGRLLLVCHVSGFYPKPVWVMWMRGEQEEPGTQQGDIMPNANWTWHLRATLDVAAGEAAGLSCRVKHSSLGDQDIVLYWGHPTSTGLIFVAIIVSSLILLICLALWFWRRWSYLTIL</sequence>
<keyword id="KW-1064">Adaptive immunity</keyword>
<keyword id="KW-1003">Cell membrane</keyword>
<keyword id="KW-1015">Disulfide bond</keyword>
<keyword id="KW-0967">Endosome</keyword>
<keyword id="KW-0325">Glycoprotein</keyword>
<keyword id="KW-0391">Immunity</keyword>
<keyword id="KW-0393">Immunoglobulin domain</keyword>
<keyword id="KW-0458">Lysosome</keyword>
<keyword id="KW-0472">Membrane</keyword>
<keyword id="KW-1185">Reference proteome</keyword>
<keyword id="KW-0732">Signal</keyword>
<keyword id="KW-0812">Transmembrane</keyword>
<keyword id="KW-1133">Transmembrane helix</keyword>
<dbReference type="EMBL" id="Z36890">
    <property type="protein sequence ID" value="CAA85359.1"/>
    <property type="molecule type" value="mRNA"/>
</dbReference>
<dbReference type="RefSeq" id="NP_001116474.1">
    <property type="nucleotide sequence ID" value="NM_001123002.2"/>
</dbReference>
<dbReference type="SMR" id="Q28565"/>
<dbReference type="STRING" id="9940.ENSOARP00000007799"/>
<dbReference type="PaxDb" id="9940-ENSOARP00000007799"/>
<dbReference type="GeneID" id="100144425"/>
<dbReference type="KEGG" id="oas:100144425"/>
<dbReference type="CTD" id="111334"/>
<dbReference type="eggNOG" id="ENOG502SJH6">
    <property type="taxonomic scope" value="Eukaryota"/>
</dbReference>
<dbReference type="OrthoDB" id="8890485at2759"/>
<dbReference type="Proteomes" id="UP000002356">
    <property type="component" value="Unplaced"/>
</dbReference>
<dbReference type="GO" id="GO:0010008">
    <property type="term" value="C:endosome membrane"/>
    <property type="evidence" value="ECO:0007669"/>
    <property type="project" value="UniProtKB-SubCell"/>
</dbReference>
<dbReference type="GO" id="GO:0009897">
    <property type="term" value="C:external side of plasma membrane"/>
    <property type="evidence" value="ECO:0007669"/>
    <property type="project" value="TreeGrafter"/>
</dbReference>
<dbReference type="GO" id="GO:0005615">
    <property type="term" value="C:extracellular space"/>
    <property type="evidence" value="ECO:0007669"/>
    <property type="project" value="TreeGrafter"/>
</dbReference>
<dbReference type="GO" id="GO:0005765">
    <property type="term" value="C:lysosomal membrane"/>
    <property type="evidence" value="ECO:0007669"/>
    <property type="project" value="UniProtKB-SubCell"/>
</dbReference>
<dbReference type="GO" id="GO:0030883">
    <property type="term" value="F:endogenous lipid antigen binding"/>
    <property type="evidence" value="ECO:0007669"/>
    <property type="project" value="TreeGrafter"/>
</dbReference>
<dbReference type="GO" id="GO:0030884">
    <property type="term" value="F:exogenous lipid antigen binding"/>
    <property type="evidence" value="ECO:0007669"/>
    <property type="project" value="TreeGrafter"/>
</dbReference>
<dbReference type="GO" id="GO:0071723">
    <property type="term" value="F:lipopeptide binding"/>
    <property type="evidence" value="ECO:0007669"/>
    <property type="project" value="TreeGrafter"/>
</dbReference>
<dbReference type="GO" id="GO:0002250">
    <property type="term" value="P:adaptive immune response"/>
    <property type="evidence" value="ECO:0007669"/>
    <property type="project" value="UniProtKB-KW"/>
</dbReference>
<dbReference type="GO" id="GO:0048006">
    <property type="term" value="P:antigen processing and presentation, endogenous lipid antigen via MHC class Ib"/>
    <property type="evidence" value="ECO:0007669"/>
    <property type="project" value="TreeGrafter"/>
</dbReference>
<dbReference type="GO" id="GO:0048007">
    <property type="term" value="P:antigen processing and presentation, exogenous lipid antigen via MHC class Ib"/>
    <property type="evidence" value="ECO:0007669"/>
    <property type="project" value="TreeGrafter"/>
</dbReference>
<dbReference type="GO" id="GO:0001916">
    <property type="term" value="P:positive regulation of T cell mediated cytotoxicity"/>
    <property type="evidence" value="ECO:0007669"/>
    <property type="project" value="TreeGrafter"/>
</dbReference>
<dbReference type="CDD" id="cd21029">
    <property type="entry name" value="IgC1_CD1"/>
    <property type="match status" value="1"/>
</dbReference>
<dbReference type="FunFam" id="2.60.40.10:FF:000254">
    <property type="entry name" value="Antigen-presenting glycoprotein CD1d1"/>
    <property type="match status" value="1"/>
</dbReference>
<dbReference type="FunFam" id="3.30.500.10:FF:000002">
    <property type="entry name" value="Antigen-presenting glycoprotein CD1d1"/>
    <property type="match status" value="1"/>
</dbReference>
<dbReference type="Gene3D" id="2.60.40.10">
    <property type="entry name" value="Immunoglobulins"/>
    <property type="match status" value="1"/>
</dbReference>
<dbReference type="Gene3D" id="3.30.500.10">
    <property type="entry name" value="MHC class I-like antigen recognition-like"/>
    <property type="match status" value="1"/>
</dbReference>
<dbReference type="InterPro" id="IPR007110">
    <property type="entry name" value="Ig-like_dom"/>
</dbReference>
<dbReference type="InterPro" id="IPR036179">
    <property type="entry name" value="Ig-like_dom_sf"/>
</dbReference>
<dbReference type="InterPro" id="IPR013783">
    <property type="entry name" value="Ig-like_fold"/>
</dbReference>
<dbReference type="InterPro" id="IPR003597">
    <property type="entry name" value="Ig_C1-set"/>
</dbReference>
<dbReference type="InterPro" id="IPR050208">
    <property type="entry name" value="MHC_class-I_related"/>
</dbReference>
<dbReference type="InterPro" id="IPR011161">
    <property type="entry name" value="MHC_I-like_Ag-recog"/>
</dbReference>
<dbReference type="InterPro" id="IPR037055">
    <property type="entry name" value="MHC_I-like_Ag-recog_sf"/>
</dbReference>
<dbReference type="InterPro" id="IPR011162">
    <property type="entry name" value="MHC_I/II-like_Ag-recog"/>
</dbReference>
<dbReference type="PANTHER" id="PTHR16675">
    <property type="entry name" value="MHC CLASS I-RELATED"/>
    <property type="match status" value="1"/>
</dbReference>
<dbReference type="PANTHER" id="PTHR16675:SF130">
    <property type="entry name" value="T-CELL SURFACE GLYCOPROTEIN CD1B"/>
    <property type="match status" value="1"/>
</dbReference>
<dbReference type="Pfam" id="PF07654">
    <property type="entry name" value="C1-set"/>
    <property type="match status" value="1"/>
</dbReference>
<dbReference type="Pfam" id="PF16497">
    <property type="entry name" value="MHC_I_3"/>
    <property type="match status" value="1"/>
</dbReference>
<dbReference type="SMART" id="SM00407">
    <property type="entry name" value="IGc1"/>
    <property type="match status" value="1"/>
</dbReference>
<dbReference type="SUPFAM" id="SSF48726">
    <property type="entry name" value="Immunoglobulin"/>
    <property type="match status" value="1"/>
</dbReference>
<dbReference type="SUPFAM" id="SSF54452">
    <property type="entry name" value="MHC antigen-recognition domain"/>
    <property type="match status" value="1"/>
</dbReference>
<dbReference type="PROSITE" id="PS50835">
    <property type="entry name" value="IG_LIKE"/>
    <property type="match status" value="1"/>
</dbReference>
<accession>Q28565</accession>
<organism>
    <name type="scientific">Ovis aries</name>
    <name type="common">Sheep</name>
    <dbReference type="NCBI Taxonomy" id="9940"/>
    <lineage>
        <taxon>Eukaryota</taxon>
        <taxon>Metazoa</taxon>
        <taxon>Chordata</taxon>
        <taxon>Craniata</taxon>
        <taxon>Vertebrata</taxon>
        <taxon>Euteleostomi</taxon>
        <taxon>Mammalia</taxon>
        <taxon>Eutheria</taxon>
        <taxon>Laurasiatheria</taxon>
        <taxon>Artiodactyla</taxon>
        <taxon>Ruminantia</taxon>
        <taxon>Pecora</taxon>
        <taxon>Bovidae</taxon>
        <taxon>Caprinae</taxon>
        <taxon>Ovis</taxon>
    </lineage>
</organism>
<evidence type="ECO:0000250" key="1"/>
<evidence type="ECO:0000255" key="2"/>
<evidence type="ECO:0000255" key="3">
    <source>
        <dbReference type="PROSITE-ProRule" id="PRU00114"/>
    </source>
</evidence>
<protein>
    <recommendedName>
        <fullName>T-cell surface glycoprotein CD1b-1</fullName>
    </recommendedName>
    <alternativeName>
        <fullName>sCD1A-25</fullName>
    </alternativeName>
    <cdAntigenName>CD1b-1</cdAntigenName>
</protein>
<feature type="signal peptide" evidence="1">
    <location>
        <begin position="1"/>
        <end position="18"/>
    </location>
</feature>
<feature type="chain" id="PRO_0000014596" description="T-cell surface glycoprotein CD1b-1">
    <location>
        <begin position="19"/>
        <end position="333"/>
    </location>
</feature>
<feature type="topological domain" description="Extracellular" evidence="2">
    <location>
        <begin position="19"/>
        <end position="302"/>
    </location>
</feature>
<feature type="transmembrane region" description="Helical" evidence="2">
    <location>
        <begin position="303"/>
        <end position="323"/>
    </location>
</feature>
<feature type="topological domain" description="Cytoplasmic" evidence="2">
    <location>
        <begin position="324"/>
        <end position="333"/>
    </location>
</feature>
<feature type="domain" description="Ig-like">
    <location>
        <begin position="185"/>
        <end position="295"/>
    </location>
</feature>
<feature type="short sequence motif" description="Internalization signal" evidence="1">
    <location>
        <begin position="329"/>
        <end position="332"/>
    </location>
</feature>
<feature type="glycosylation site" description="N-linked (GlcNAc...) asparagine" evidence="2">
    <location>
        <position position="38"/>
    </location>
</feature>
<feature type="glycosylation site" description="N-linked (GlcNAc...) asparagine" evidence="2">
    <location>
        <position position="75"/>
    </location>
</feature>
<feature type="glycosylation site" description="N-linked (GlcNAc...) asparagine" evidence="2">
    <location>
        <position position="146"/>
    </location>
</feature>
<feature type="glycosylation site" description="N-linked (GlcNAc...) asparagine" evidence="2">
    <location>
        <position position="258"/>
    </location>
</feature>
<feature type="disulfide bond" evidence="3">
    <location>
        <begin position="120"/>
        <end position="184"/>
    </location>
</feature>
<feature type="disulfide bond" evidence="3">
    <location>
        <begin position="224"/>
        <end position="279"/>
    </location>
</feature>
<comment type="function">
    <text evidence="1">Antigen-presenting protein that binds self and non-self lipid and glycolipid antigens and presents them to T-cell receptors on natural killer T-cells.</text>
</comment>
<comment type="subunit">
    <text evidence="1">Heterodimer with B2M (beta-2-microglobulin). Interacts with saposin C (By similarity).</text>
</comment>
<comment type="subcellular location">
    <subcellularLocation>
        <location evidence="1">Cell membrane</location>
        <topology evidence="1">Single-pass type I membrane protein</topology>
    </subcellularLocation>
    <subcellularLocation>
        <location evidence="1">Endosome membrane</location>
    </subcellularLocation>
    <subcellularLocation>
        <location evidence="1">Lysosome membrane</location>
    </subcellularLocation>
    <text evidence="1">Subject to intracellular trafficking between the cell membrane, endosomes and lysosomes. Localizes to cell surface lipid rafts (By similarity).</text>
</comment>
<comment type="miscellaneous">
    <text evidence="1">During protein synthesis and maturation, CD1 family members bind endogenous lipids that are replaced by lipid or glycolipid antigens when the proteins are internalized and pass through endosomes or lysosomes, before trafficking back to the cell surface. Interaction with saposin C is required for the loading of bacterial lipid antigens onto CD1B in the lysosome (By similarity).</text>
</comment>
<name>CD1B1_SHEEP</name>
<proteinExistence type="evidence at transcript level"/>